<proteinExistence type="evidence at protein level"/>
<accession>P0ADI0</accession>
<accession>P77574</accession>
<name>PINR_ECOLI</name>
<sequence>MSRIFAYCRISTLDQTTENQRREIESAGFKIKPQQIIEEHISGSAATSERPGFNRLLARLKCGDQLIVTKLDRLGCNAMDIRKTVEQLTETGIRVHCLALGGIDLTSPTGKMMMQVISAVAEFERDLLLERTHSGIVRARGAGKRFGRPPVLNEEQKQVVFERIKSGVSISAIAREFKTSRQTILRAKAKLQTPDI</sequence>
<keyword id="KW-0229">DNA integration</keyword>
<keyword id="KW-0230">DNA invertase</keyword>
<keyword id="KW-0233">DNA recombination</keyword>
<keyword id="KW-0238">DNA-binding</keyword>
<keyword id="KW-0378">Hydrolase</keyword>
<keyword id="KW-0436">Ligase</keyword>
<keyword id="KW-1185">Reference proteome</keyword>
<gene>
    <name type="primary">pinR</name>
    <name type="synonym">ynaD</name>
    <name type="ordered locus">b1374</name>
    <name type="ordered locus">JW1368</name>
</gene>
<evidence type="ECO:0000250" key="1">
    <source>
        <dbReference type="UniProtKB" id="P03015"/>
    </source>
</evidence>
<evidence type="ECO:0000255" key="2">
    <source>
        <dbReference type="PROSITE-ProRule" id="PRU01072"/>
    </source>
</evidence>
<evidence type="ECO:0000305" key="3"/>
<organism>
    <name type="scientific">Escherichia coli (strain K12)</name>
    <dbReference type="NCBI Taxonomy" id="83333"/>
    <lineage>
        <taxon>Bacteria</taxon>
        <taxon>Pseudomonadati</taxon>
        <taxon>Pseudomonadota</taxon>
        <taxon>Gammaproteobacteria</taxon>
        <taxon>Enterobacterales</taxon>
        <taxon>Enterobacteriaceae</taxon>
        <taxon>Escherichia</taxon>
    </lineage>
</organism>
<feature type="chain" id="PRO_0000196363" description="Serine recombinase PinR">
    <location>
        <begin position="1"/>
        <end position="196"/>
    </location>
</feature>
<feature type="domain" description="Resolvase/invertase-type recombinase catalytic" evidence="2">
    <location>
        <begin position="3"/>
        <end position="143"/>
    </location>
</feature>
<feature type="active site" description="O-(5'-phospho-DNA)-serine intermediate" evidence="2">
    <location>
        <position position="11"/>
    </location>
</feature>
<protein>
    <recommendedName>
        <fullName evidence="1">Serine recombinase PinR</fullName>
        <ecNumber>3.1.22.-</ecNumber>
        <ecNumber>6.5.1.-</ecNumber>
    </recommendedName>
    <alternativeName>
        <fullName evidence="3">DNA-invertase PinR</fullName>
    </alternativeName>
    <alternativeName>
        <fullName>Putative DNA-invertase from lambdoid prophage Rac</fullName>
    </alternativeName>
    <alternativeName>
        <fullName evidence="3">Site-specific recombinase PinR</fullName>
    </alternativeName>
</protein>
<dbReference type="EC" id="3.1.22.-"/>
<dbReference type="EC" id="6.5.1.-"/>
<dbReference type="EMBL" id="U00096">
    <property type="protein sequence ID" value="AAC74456.1"/>
    <property type="molecule type" value="Genomic_DNA"/>
</dbReference>
<dbReference type="EMBL" id="AP009048">
    <property type="protein sequence ID" value="BAA14979.1"/>
    <property type="molecule type" value="Genomic_DNA"/>
</dbReference>
<dbReference type="PIR" id="A64888">
    <property type="entry name" value="A64888"/>
</dbReference>
<dbReference type="RefSeq" id="NP_415892.1">
    <property type="nucleotide sequence ID" value="NC_000913.3"/>
</dbReference>
<dbReference type="RefSeq" id="WP_000086527.1">
    <property type="nucleotide sequence ID" value="NZ_SSUU01000015.1"/>
</dbReference>
<dbReference type="SMR" id="P0ADI0"/>
<dbReference type="BioGRID" id="4263521">
    <property type="interactions" value="170"/>
</dbReference>
<dbReference type="DIP" id="DIP-47969N"/>
<dbReference type="FunCoup" id="P0ADI0">
    <property type="interactions" value="59"/>
</dbReference>
<dbReference type="IntAct" id="P0ADI0">
    <property type="interactions" value="9"/>
</dbReference>
<dbReference type="STRING" id="511145.b1374"/>
<dbReference type="PaxDb" id="511145-b1374"/>
<dbReference type="EnsemblBacteria" id="AAC74456">
    <property type="protein sequence ID" value="AAC74456"/>
    <property type="gene ID" value="b1374"/>
</dbReference>
<dbReference type="GeneID" id="948973"/>
<dbReference type="KEGG" id="ecj:JW1368"/>
<dbReference type="KEGG" id="eco:b1374"/>
<dbReference type="KEGG" id="ecoc:C3026_08030"/>
<dbReference type="PATRIC" id="fig|511145.12.peg.1435"/>
<dbReference type="EchoBASE" id="EB3154"/>
<dbReference type="eggNOG" id="COG1961">
    <property type="taxonomic scope" value="Bacteria"/>
</dbReference>
<dbReference type="HOGENOM" id="CLU_010686_8_2_6"/>
<dbReference type="InParanoid" id="P0ADI0"/>
<dbReference type="OMA" id="EQIRFAY"/>
<dbReference type="OrthoDB" id="9797501at2"/>
<dbReference type="PhylomeDB" id="P0ADI0"/>
<dbReference type="BioCyc" id="EcoCyc:G6697-MONOMER"/>
<dbReference type="PRO" id="PR:P0ADI0"/>
<dbReference type="Proteomes" id="UP000000625">
    <property type="component" value="Chromosome"/>
</dbReference>
<dbReference type="GO" id="GO:0003677">
    <property type="term" value="F:DNA binding"/>
    <property type="evidence" value="ECO:0007669"/>
    <property type="project" value="UniProtKB-KW"/>
</dbReference>
<dbReference type="GO" id="GO:0000150">
    <property type="term" value="F:DNA strand exchange activity"/>
    <property type="evidence" value="ECO:0000318"/>
    <property type="project" value="GO_Central"/>
</dbReference>
<dbReference type="GO" id="GO:0016787">
    <property type="term" value="F:hydrolase activity"/>
    <property type="evidence" value="ECO:0007669"/>
    <property type="project" value="UniProtKB-KW"/>
</dbReference>
<dbReference type="GO" id="GO:0016874">
    <property type="term" value="F:ligase activity"/>
    <property type="evidence" value="ECO:0007669"/>
    <property type="project" value="UniProtKB-KW"/>
</dbReference>
<dbReference type="GO" id="GO:0015074">
    <property type="term" value="P:DNA integration"/>
    <property type="evidence" value="ECO:0007669"/>
    <property type="project" value="UniProtKB-KW"/>
</dbReference>
<dbReference type="GO" id="GO:0006310">
    <property type="term" value="P:DNA recombination"/>
    <property type="evidence" value="ECO:0000318"/>
    <property type="project" value="GO_Central"/>
</dbReference>
<dbReference type="CDD" id="cd00569">
    <property type="entry name" value="HTH_Hin_like"/>
    <property type="match status" value="1"/>
</dbReference>
<dbReference type="CDD" id="cd03768">
    <property type="entry name" value="SR_ResInv"/>
    <property type="match status" value="1"/>
</dbReference>
<dbReference type="Gene3D" id="1.10.10.60">
    <property type="entry name" value="Homeodomain-like"/>
    <property type="match status" value="1"/>
</dbReference>
<dbReference type="Gene3D" id="3.40.50.1390">
    <property type="entry name" value="Resolvase, N-terminal catalytic domain"/>
    <property type="match status" value="1"/>
</dbReference>
<dbReference type="InterPro" id="IPR009057">
    <property type="entry name" value="Homeodomain-like_sf"/>
</dbReference>
<dbReference type="InterPro" id="IPR006118">
    <property type="entry name" value="Recombinase_CS"/>
</dbReference>
<dbReference type="InterPro" id="IPR006119">
    <property type="entry name" value="Resolv_N"/>
</dbReference>
<dbReference type="InterPro" id="IPR036162">
    <property type="entry name" value="Resolvase-like_N_sf"/>
</dbReference>
<dbReference type="InterPro" id="IPR006120">
    <property type="entry name" value="Resolvase_HTH_dom"/>
</dbReference>
<dbReference type="InterPro" id="IPR050639">
    <property type="entry name" value="SSR_resolvase"/>
</dbReference>
<dbReference type="PANTHER" id="PTHR30461">
    <property type="entry name" value="DNA-INVERTASE FROM LAMBDOID PROPHAGE"/>
    <property type="match status" value="1"/>
</dbReference>
<dbReference type="PANTHER" id="PTHR30461:SF2">
    <property type="entry name" value="SERINE RECOMBINASE PINE-RELATED"/>
    <property type="match status" value="1"/>
</dbReference>
<dbReference type="Pfam" id="PF02796">
    <property type="entry name" value="HTH_7"/>
    <property type="match status" value="1"/>
</dbReference>
<dbReference type="Pfam" id="PF00239">
    <property type="entry name" value="Resolvase"/>
    <property type="match status" value="1"/>
</dbReference>
<dbReference type="SMART" id="SM00857">
    <property type="entry name" value="Resolvase"/>
    <property type="match status" value="1"/>
</dbReference>
<dbReference type="SUPFAM" id="SSF46689">
    <property type="entry name" value="Homeodomain-like"/>
    <property type="match status" value="1"/>
</dbReference>
<dbReference type="SUPFAM" id="SSF53041">
    <property type="entry name" value="Resolvase-like"/>
    <property type="match status" value="1"/>
</dbReference>
<dbReference type="PROSITE" id="PS00398">
    <property type="entry name" value="RECOMBINASES_2"/>
    <property type="match status" value="1"/>
</dbReference>
<dbReference type="PROSITE" id="PS51736">
    <property type="entry name" value="RECOMBINASES_3"/>
    <property type="match status" value="1"/>
</dbReference>
<comment type="interaction">
    <interactant intactId="EBI-544672">
        <id>P0ADI0</id>
    </interactant>
    <interactant intactId="EBI-542707">
        <id>P06959</id>
        <label>aceF</label>
    </interactant>
    <organismsDiffer>false</organismsDiffer>
    <experiments>3</experiments>
</comment>
<comment type="similarity">
    <text evidence="3">Belongs to the site-specific recombinase resolvase family.</text>
</comment>
<reference key="1">
    <citation type="journal article" date="1996" name="DNA Res.">
        <title>A 570-kb DNA sequence of the Escherichia coli K-12 genome corresponding to the 28.0-40.1 min region on the linkage map.</title>
        <authorList>
            <person name="Aiba H."/>
            <person name="Baba T."/>
            <person name="Fujita K."/>
            <person name="Hayashi K."/>
            <person name="Inada T."/>
            <person name="Isono K."/>
            <person name="Itoh T."/>
            <person name="Kasai H."/>
            <person name="Kashimoto K."/>
            <person name="Kimura S."/>
            <person name="Kitakawa M."/>
            <person name="Kitagawa M."/>
            <person name="Makino K."/>
            <person name="Miki T."/>
            <person name="Mizobuchi K."/>
            <person name="Mori H."/>
            <person name="Mori T."/>
            <person name="Motomura K."/>
            <person name="Nakade S."/>
            <person name="Nakamura Y."/>
            <person name="Nashimoto H."/>
            <person name="Nishio Y."/>
            <person name="Oshima T."/>
            <person name="Saito N."/>
            <person name="Sampei G."/>
            <person name="Seki Y."/>
            <person name="Sivasundaram S."/>
            <person name="Tagami H."/>
            <person name="Takeda J."/>
            <person name="Takemoto K."/>
            <person name="Takeuchi Y."/>
            <person name="Wada C."/>
            <person name="Yamamoto Y."/>
            <person name="Horiuchi T."/>
        </authorList>
    </citation>
    <scope>NUCLEOTIDE SEQUENCE [LARGE SCALE GENOMIC DNA]</scope>
    <source>
        <strain>K12 / W3110 / ATCC 27325 / DSM 5911</strain>
    </source>
</reference>
<reference key="2">
    <citation type="journal article" date="1997" name="Science">
        <title>The complete genome sequence of Escherichia coli K-12.</title>
        <authorList>
            <person name="Blattner F.R."/>
            <person name="Plunkett G. III"/>
            <person name="Bloch C.A."/>
            <person name="Perna N.T."/>
            <person name="Burland V."/>
            <person name="Riley M."/>
            <person name="Collado-Vides J."/>
            <person name="Glasner J.D."/>
            <person name="Rode C.K."/>
            <person name="Mayhew G.F."/>
            <person name="Gregor J."/>
            <person name="Davis N.W."/>
            <person name="Kirkpatrick H.A."/>
            <person name="Goeden M.A."/>
            <person name="Rose D.J."/>
            <person name="Mau B."/>
            <person name="Shao Y."/>
        </authorList>
    </citation>
    <scope>NUCLEOTIDE SEQUENCE [LARGE SCALE GENOMIC DNA]</scope>
    <source>
        <strain>K12 / MG1655 / ATCC 47076</strain>
    </source>
</reference>
<reference key="3">
    <citation type="journal article" date="2006" name="Mol. Syst. Biol.">
        <title>Highly accurate genome sequences of Escherichia coli K-12 strains MG1655 and W3110.</title>
        <authorList>
            <person name="Hayashi K."/>
            <person name="Morooka N."/>
            <person name="Yamamoto Y."/>
            <person name="Fujita K."/>
            <person name="Isono K."/>
            <person name="Choi S."/>
            <person name="Ohtsubo E."/>
            <person name="Baba T."/>
            <person name="Wanner B.L."/>
            <person name="Mori H."/>
            <person name="Horiuchi T."/>
        </authorList>
    </citation>
    <scope>NUCLEOTIDE SEQUENCE [LARGE SCALE GENOMIC DNA]</scope>
    <source>
        <strain>K12 / W3110 / ATCC 27325 / DSM 5911</strain>
    </source>
</reference>